<accession>B1MVJ0</accession>
<evidence type="ECO:0000255" key="1">
    <source>
        <dbReference type="HAMAP-Rule" id="MF_00252"/>
    </source>
</evidence>
<sequence>MAEEKALNDQMLARRQKLATIVDDLHLDPFGKRFERTAKAQELHDLYDNSTLETLESEQHEVVIAGRMIAKRGAGKVIFADFRDVSGKIQVYAKRDDLGENYPIIKRADLGDFLGIKGIIMKTEAGELTVLATELTHLTKALRPMPDKFHGIADVETRYRKRYLDLIANEESFKKFQLRSKIISAIRAYMDSQDFMEVETPILQTEAGGAAARPFITHHNALNIDMYMRIATELYLKRLVVGGFERVYEIGRIFRNEGMDPKHNPEFTTMETYAAYMDFTDVMDETEGIFKAAASVVSDDLKVTYQGTEIDLGSNFARKHMVDLIKEQTGIDFWQDMSVEAAQKLADDKHVKYEKYWGVGHIINAFFEEFVEDTLVQPTFVYGHPVEVSPLAKRNAEDSRFTDRFELFIMGSEYGNAFTELNDPIDQRARFEAQVAERENGNDEAENIDEDFIEALEYGMPPTGGLGIGIDRLVMLLTDSDTIRDVLLFPTMR</sequence>
<gene>
    <name evidence="1" type="primary">lysS</name>
    <name type="ordered locus">LCK_01420</name>
</gene>
<proteinExistence type="inferred from homology"/>
<name>SYK_LEUCK</name>
<protein>
    <recommendedName>
        <fullName evidence="1">Lysine--tRNA ligase</fullName>
        <ecNumber evidence="1">6.1.1.6</ecNumber>
    </recommendedName>
    <alternativeName>
        <fullName evidence="1">Lysyl-tRNA synthetase</fullName>
        <shortName evidence="1">LysRS</shortName>
    </alternativeName>
</protein>
<reference key="1">
    <citation type="journal article" date="2008" name="J. Bacteriol.">
        <title>Complete genome sequence of Leuconostoc citreum KM20.</title>
        <authorList>
            <person name="Kim J.F."/>
            <person name="Jeong H."/>
            <person name="Lee J.-S."/>
            <person name="Choi S.-H."/>
            <person name="Ha M."/>
            <person name="Hur C.-G."/>
            <person name="Kim J.-S."/>
            <person name="Lee S."/>
            <person name="Park H.-S."/>
            <person name="Park Y.-H."/>
            <person name="Oh T.K."/>
        </authorList>
    </citation>
    <scope>NUCLEOTIDE SEQUENCE [LARGE SCALE GENOMIC DNA]</scope>
    <source>
        <strain>KM20</strain>
    </source>
</reference>
<dbReference type="EC" id="6.1.1.6" evidence="1"/>
<dbReference type="EMBL" id="DQ489736">
    <property type="protein sequence ID" value="ACA83244.1"/>
    <property type="molecule type" value="Genomic_DNA"/>
</dbReference>
<dbReference type="RefSeq" id="WP_012305406.1">
    <property type="nucleotide sequence ID" value="NC_010471.1"/>
</dbReference>
<dbReference type="SMR" id="B1MVJ0"/>
<dbReference type="STRING" id="349519.LCK_01420"/>
<dbReference type="KEGG" id="lci:LCK_01420"/>
<dbReference type="eggNOG" id="COG1190">
    <property type="taxonomic scope" value="Bacteria"/>
</dbReference>
<dbReference type="HOGENOM" id="CLU_008255_6_0_9"/>
<dbReference type="OrthoDB" id="9801152at2"/>
<dbReference type="Proteomes" id="UP000002166">
    <property type="component" value="Chromosome"/>
</dbReference>
<dbReference type="GO" id="GO:0005829">
    <property type="term" value="C:cytosol"/>
    <property type="evidence" value="ECO:0007669"/>
    <property type="project" value="TreeGrafter"/>
</dbReference>
<dbReference type="GO" id="GO:0005524">
    <property type="term" value="F:ATP binding"/>
    <property type="evidence" value="ECO:0007669"/>
    <property type="project" value="UniProtKB-UniRule"/>
</dbReference>
<dbReference type="GO" id="GO:0140096">
    <property type="term" value="F:catalytic activity, acting on a protein"/>
    <property type="evidence" value="ECO:0007669"/>
    <property type="project" value="UniProtKB-ARBA"/>
</dbReference>
<dbReference type="GO" id="GO:0004824">
    <property type="term" value="F:lysine-tRNA ligase activity"/>
    <property type="evidence" value="ECO:0007669"/>
    <property type="project" value="UniProtKB-UniRule"/>
</dbReference>
<dbReference type="GO" id="GO:0000287">
    <property type="term" value="F:magnesium ion binding"/>
    <property type="evidence" value="ECO:0007669"/>
    <property type="project" value="UniProtKB-UniRule"/>
</dbReference>
<dbReference type="GO" id="GO:0016740">
    <property type="term" value="F:transferase activity"/>
    <property type="evidence" value="ECO:0007669"/>
    <property type="project" value="UniProtKB-ARBA"/>
</dbReference>
<dbReference type="GO" id="GO:0000049">
    <property type="term" value="F:tRNA binding"/>
    <property type="evidence" value="ECO:0007669"/>
    <property type="project" value="TreeGrafter"/>
</dbReference>
<dbReference type="GO" id="GO:0006430">
    <property type="term" value="P:lysyl-tRNA aminoacylation"/>
    <property type="evidence" value="ECO:0007669"/>
    <property type="project" value="UniProtKB-UniRule"/>
</dbReference>
<dbReference type="CDD" id="cd00775">
    <property type="entry name" value="LysRS_core"/>
    <property type="match status" value="1"/>
</dbReference>
<dbReference type="CDD" id="cd04322">
    <property type="entry name" value="LysRS_N"/>
    <property type="match status" value="1"/>
</dbReference>
<dbReference type="FunFam" id="2.40.50.140:FF:000024">
    <property type="entry name" value="Lysine--tRNA ligase"/>
    <property type="match status" value="1"/>
</dbReference>
<dbReference type="FunFam" id="3.30.930.10:FF:000001">
    <property type="entry name" value="Lysine--tRNA ligase"/>
    <property type="match status" value="1"/>
</dbReference>
<dbReference type="Gene3D" id="3.30.930.10">
    <property type="entry name" value="Bira Bifunctional Protein, Domain 2"/>
    <property type="match status" value="1"/>
</dbReference>
<dbReference type="Gene3D" id="2.40.50.140">
    <property type="entry name" value="Nucleic acid-binding proteins"/>
    <property type="match status" value="1"/>
</dbReference>
<dbReference type="HAMAP" id="MF_00252">
    <property type="entry name" value="Lys_tRNA_synth_class2"/>
    <property type="match status" value="1"/>
</dbReference>
<dbReference type="InterPro" id="IPR004364">
    <property type="entry name" value="Aa-tRNA-synt_II"/>
</dbReference>
<dbReference type="InterPro" id="IPR006195">
    <property type="entry name" value="aa-tRNA-synth_II"/>
</dbReference>
<dbReference type="InterPro" id="IPR045864">
    <property type="entry name" value="aa-tRNA-synth_II/BPL/LPL"/>
</dbReference>
<dbReference type="InterPro" id="IPR002313">
    <property type="entry name" value="Lys-tRNA-ligase_II"/>
</dbReference>
<dbReference type="InterPro" id="IPR044136">
    <property type="entry name" value="Lys-tRNA-ligase_II_N"/>
</dbReference>
<dbReference type="InterPro" id="IPR018149">
    <property type="entry name" value="Lys-tRNA-synth_II_C"/>
</dbReference>
<dbReference type="InterPro" id="IPR012340">
    <property type="entry name" value="NA-bd_OB-fold"/>
</dbReference>
<dbReference type="InterPro" id="IPR004365">
    <property type="entry name" value="NA-bd_OB_tRNA"/>
</dbReference>
<dbReference type="NCBIfam" id="TIGR00499">
    <property type="entry name" value="lysS_bact"/>
    <property type="match status" value="1"/>
</dbReference>
<dbReference type="NCBIfam" id="NF001756">
    <property type="entry name" value="PRK00484.1"/>
    <property type="match status" value="1"/>
</dbReference>
<dbReference type="PANTHER" id="PTHR42918:SF15">
    <property type="entry name" value="LYSINE--TRNA LIGASE, CHLOROPLASTIC_MITOCHONDRIAL"/>
    <property type="match status" value="1"/>
</dbReference>
<dbReference type="PANTHER" id="PTHR42918">
    <property type="entry name" value="LYSYL-TRNA SYNTHETASE"/>
    <property type="match status" value="1"/>
</dbReference>
<dbReference type="Pfam" id="PF00152">
    <property type="entry name" value="tRNA-synt_2"/>
    <property type="match status" value="1"/>
</dbReference>
<dbReference type="Pfam" id="PF01336">
    <property type="entry name" value="tRNA_anti-codon"/>
    <property type="match status" value="1"/>
</dbReference>
<dbReference type="PRINTS" id="PR00982">
    <property type="entry name" value="TRNASYNTHLYS"/>
</dbReference>
<dbReference type="SUPFAM" id="SSF55681">
    <property type="entry name" value="Class II aaRS and biotin synthetases"/>
    <property type="match status" value="1"/>
</dbReference>
<dbReference type="SUPFAM" id="SSF50249">
    <property type="entry name" value="Nucleic acid-binding proteins"/>
    <property type="match status" value="1"/>
</dbReference>
<dbReference type="PROSITE" id="PS50862">
    <property type="entry name" value="AA_TRNA_LIGASE_II"/>
    <property type="match status" value="1"/>
</dbReference>
<comment type="catalytic activity">
    <reaction evidence="1">
        <text>tRNA(Lys) + L-lysine + ATP = L-lysyl-tRNA(Lys) + AMP + diphosphate</text>
        <dbReference type="Rhea" id="RHEA:20792"/>
        <dbReference type="Rhea" id="RHEA-COMP:9696"/>
        <dbReference type="Rhea" id="RHEA-COMP:9697"/>
        <dbReference type="ChEBI" id="CHEBI:30616"/>
        <dbReference type="ChEBI" id="CHEBI:32551"/>
        <dbReference type="ChEBI" id="CHEBI:33019"/>
        <dbReference type="ChEBI" id="CHEBI:78442"/>
        <dbReference type="ChEBI" id="CHEBI:78529"/>
        <dbReference type="ChEBI" id="CHEBI:456215"/>
        <dbReference type="EC" id="6.1.1.6"/>
    </reaction>
</comment>
<comment type="cofactor">
    <cofactor evidence="1">
        <name>Mg(2+)</name>
        <dbReference type="ChEBI" id="CHEBI:18420"/>
    </cofactor>
    <text evidence="1">Binds 3 Mg(2+) ions per subunit.</text>
</comment>
<comment type="subunit">
    <text evidence="1">Homodimer.</text>
</comment>
<comment type="subcellular location">
    <subcellularLocation>
        <location evidence="1">Cytoplasm</location>
    </subcellularLocation>
</comment>
<comment type="similarity">
    <text evidence="1">Belongs to the class-II aminoacyl-tRNA synthetase family.</text>
</comment>
<feature type="chain" id="PRO_1000101125" description="Lysine--tRNA ligase">
    <location>
        <begin position="1"/>
        <end position="493"/>
    </location>
</feature>
<feature type="binding site" evidence="1">
    <location>
        <position position="406"/>
    </location>
    <ligand>
        <name>Mg(2+)</name>
        <dbReference type="ChEBI" id="CHEBI:18420"/>
        <label>1</label>
    </ligand>
</feature>
<feature type="binding site" evidence="1">
    <location>
        <position position="413"/>
    </location>
    <ligand>
        <name>Mg(2+)</name>
        <dbReference type="ChEBI" id="CHEBI:18420"/>
        <label>1</label>
    </ligand>
</feature>
<feature type="binding site" evidence="1">
    <location>
        <position position="413"/>
    </location>
    <ligand>
        <name>Mg(2+)</name>
        <dbReference type="ChEBI" id="CHEBI:18420"/>
        <label>2</label>
    </ligand>
</feature>
<organism>
    <name type="scientific">Leuconostoc citreum (strain KM20)</name>
    <dbReference type="NCBI Taxonomy" id="349519"/>
    <lineage>
        <taxon>Bacteria</taxon>
        <taxon>Bacillati</taxon>
        <taxon>Bacillota</taxon>
        <taxon>Bacilli</taxon>
        <taxon>Lactobacillales</taxon>
        <taxon>Lactobacillaceae</taxon>
        <taxon>Leuconostoc</taxon>
    </lineage>
</organism>
<keyword id="KW-0030">Aminoacyl-tRNA synthetase</keyword>
<keyword id="KW-0067">ATP-binding</keyword>
<keyword id="KW-0963">Cytoplasm</keyword>
<keyword id="KW-0436">Ligase</keyword>
<keyword id="KW-0460">Magnesium</keyword>
<keyword id="KW-0479">Metal-binding</keyword>
<keyword id="KW-0547">Nucleotide-binding</keyword>
<keyword id="KW-0648">Protein biosynthesis</keyword>
<keyword id="KW-1185">Reference proteome</keyword>